<keyword id="KW-0004">4Fe-4S</keyword>
<keyword id="KW-0249">Electron transport</keyword>
<keyword id="KW-0408">Iron</keyword>
<keyword id="KW-0411">Iron-sulfur</keyword>
<keyword id="KW-0479">Metal-binding</keyword>
<keyword id="KW-1185">Reference proteome</keyword>
<keyword id="KW-0677">Repeat</keyword>
<keyword id="KW-0813">Transport</keyword>
<name>Y1302_METJA</name>
<sequence>MVIELAELKNFAKIFLTGIYENLERIIFGSGRYTSLEMRNAILTGTVKIPKTVIEELCIGCEGCANVCPTKAIEMIPIEPVKITDNYVKDKIPKINPEKCVYCLYCHDFCPVFSVFNEISPIHPRDVGEEYIEIDISKLLQKKIEISEEQINKISSLLSINLRRIIKD</sequence>
<feature type="chain" id="PRO_0000159152" description="Uncharacterized polyferredoxin-like protein MJ1302">
    <location>
        <begin position="1"/>
        <end position="168"/>
    </location>
</feature>
<feature type="domain" description="4Fe-4S ferredoxin-type 1" evidence="2">
    <location>
        <begin position="48"/>
        <end position="78"/>
    </location>
</feature>
<feature type="domain" description="4Fe-4S ferredoxin-type 2" evidence="2">
    <location>
        <begin position="91"/>
        <end position="122"/>
    </location>
</feature>
<feature type="binding site" evidence="1">
    <location>
        <position position="58"/>
    </location>
    <ligand>
        <name>[4Fe-4S] cluster</name>
        <dbReference type="ChEBI" id="CHEBI:49883"/>
    </ligand>
</feature>
<feature type="binding site" evidence="1">
    <location>
        <position position="61"/>
    </location>
    <ligand>
        <name>[4Fe-4S] cluster</name>
        <dbReference type="ChEBI" id="CHEBI:49883"/>
    </ligand>
</feature>
<feature type="binding site" evidence="1">
    <location>
        <position position="64"/>
    </location>
    <ligand>
        <name>[4Fe-4S] cluster</name>
        <dbReference type="ChEBI" id="CHEBI:49883"/>
    </ligand>
</feature>
<feature type="binding site" evidence="1">
    <location>
        <position position="68"/>
    </location>
    <ligand>
        <name>[4Fe-4S] cluster</name>
        <dbReference type="ChEBI" id="CHEBI:49883"/>
    </ligand>
</feature>
<feature type="binding site" evidence="1">
    <location>
        <position position="100"/>
    </location>
    <ligand>
        <name>[4Fe-4S] cluster</name>
        <dbReference type="ChEBI" id="CHEBI:49883"/>
    </ligand>
</feature>
<feature type="binding site" evidence="1">
    <location>
        <position position="103"/>
    </location>
    <ligand>
        <name>[4Fe-4S] cluster</name>
        <dbReference type="ChEBI" id="CHEBI:49883"/>
    </ligand>
</feature>
<feature type="binding site" evidence="1">
    <location>
        <position position="106"/>
    </location>
    <ligand>
        <name>[4Fe-4S] cluster</name>
        <dbReference type="ChEBI" id="CHEBI:49883"/>
    </ligand>
</feature>
<feature type="binding site" evidence="1">
    <location>
        <position position="110"/>
    </location>
    <ligand>
        <name>[4Fe-4S] cluster</name>
        <dbReference type="ChEBI" id="CHEBI:49883"/>
    </ligand>
</feature>
<gene>
    <name type="ordered locus">MJ1302</name>
</gene>
<protein>
    <recommendedName>
        <fullName>Uncharacterized polyferredoxin-like protein MJ1302</fullName>
    </recommendedName>
</protein>
<accession>Q58698</accession>
<organism>
    <name type="scientific">Methanocaldococcus jannaschii (strain ATCC 43067 / DSM 2661 / JAL-1 / JCM 10045 / NBRC 100440)</name>
    <name type="common">Methanococcus jannaschii</name>
    <dbReference type="NCBI Taxonomy" id="243232"/>
    <lineage>
        <taxon>Archaea</taxon>
        <taxon>Methanobacteriati</taxon>
        <taxon>Methanobacteriota</taxon>
        <taxon>Methanomada group</taxon>
        <taxon>Methanococci</taxon>
        <taxon>Methanococcales</taxon>
        <taxon>Methanocaldococcaceae</taxon>
        <taxon>Methanocaldococcus</taxon>
    </lineage>
</organism>
<dbReference type="EMBL" id="L77117">
    <property type="protein sequence ID" value="AAB99311.1"/>
    <property type="molecule type" value="Genomic_DNA"/>
</dbReference>
<dbReference type="PIR" id="E64462">
    <property type="entry name" value="E64462"/>
</dbReference>
<dbReference type="SMR" id="Q58698"/>
<dbReference type="FunCoup" id="Q58698">
    <property type="interactions" value="2"/>
</dbReference>
<dbReference type="STRING" id="243232.MJ_1302"/>
<dbReference type="PaxDb" id="243232-MJ_1302"/>
<dbReference type="EnsemblBacteria" id="AAB99311">
    <property type="protein sequence ID" value="AAB99311"/>
    <property type="gene ID" value="MJ_1302"/>
</dbReference>
<dbReference type="KEGG" id="mja:MJ_1302"/>
<dbReference type="eggNOG" id="arCOG01543">
    <property type="taxonomic scope" value="Archaea"/>
</dbReference>
<dbReference type="HOGENOM" id="CLU_108340_0_0_2"/>
<dbReference type="InParanoid" id="Q58698"/>
<dbReference type="OrthoDB" id="2837at2157"/>
<dbReference type="PhylomeDB" id="Q58698"/>
<dbReference type="Proteomes" id="UP000000805">
    <property type="component" value="Chromosome"/>
</dbReference>
<dbReference type="GO" id="GO:0051539">
    <property type="term" value="F:4 iron, 4 sulfur cluster binding"/>
    <property type="evidence" value="ECO:0007669"/>
    <property type="project" value="UniProtKB-KW"/>
</dbReference>
<dbReference type="GO" id="GO:0046872">
    <property type="term" value="F:metal ion binding"/>
    <property type="evidence" value="ECO:0007669"/>
    <property type="project" value="UniProtKB-KW"/>
</dbReference>
<dbReference type="GO" id="GO:0016491">
    <property type="term" value="F:oxidoreductase activity"/>
    <property type="evidence" value="ECO:0007669"/>
    <property type="project" value="UniProtKB-ARBA"/>
</dbReference>
<dbReference type="Gene3D" id="3.30.70.3270">
    <property type="match status" value="1"/>
</dbReference>
<dbReference type="InterPro" id="IPR017896">
    <property type="entry name" value="4Fe4S_Fe-S-bd"/>
</dbReference>
<dbReference type="InterPro" id="IPR017900">
    <property type="entry name" value="4Fe4S_Fe_S_CS"/>
</dbReference>
<dbReference type="InterPro" id="IPR050572">
    <property type="entry name" value="Fe-S_Ferredoxin"/>
</dbReference>
<dbReference type="NCBIfam" id="NF004914">
    <property type="entry name" value="PRK06273.1"/>
    <property type="match status" value="1"/>
</dbReference>
<dbReference type="PANTHER" id="PTHR43687:SF5">
    <property type="entry name" value="4FE-4S FERREDOXIN-TYPE DOMAIN-CONTAINING PROTEIN"/>
    <property type="match status" value="1"/>
</dbReference>
<dbReference type="PANTHER" id="PTHR43687">
    <property type="entry name" value="ADENYLYLSULFATE REDUCTASE, BETA SUBUNIT"/>
    <property type="match status" value="1"/>
</dbReference>
<dbReference type="Pfam" id="PF12838">
    <property type="entry name" value="Fer4_7"/>
    <property type="match status" value="1"/>
</dbReference>
<dbReference type="SUPFAM" id="SSF54862">
    <property type="entry name" value="4Fe-4S ferredoxins"/>
    <property type="match status" value="1"/>
</dbReference>
<dbReference type="PROSITE" id="PS00198">
    <property type="entry name" value="4FE4S_FER_1"/>
    <property type="match status" value="2"/>
</dbReference>
<dbReference type="PROSITE" id="PS51379">
    <property type="entry name" value="4FE4S_FER_2"/>
    <property type="match status" value="2"/>
</dbReference>
<reference key="1">
    <citation type="journal article" date="1996" name="Science">
        <title>Complete genome sequence of the methanogenic archaeon, Methanococcus jannaschii.</title>
        <authorList>
            <person name="Bult C.J."/>
            <person name="White O."/>
            <person name="Olsen G.J."/>
            <person name="Zhou L."/>
            <person name="Fleischmann R.D."/>
            <person name="Sutton G.G."/>
            <person name="Blake J.A."/>
            <person name="FitzGerald L.M."/>
            <person name="Clayton R.A."/>
            <person name="Gocayne J.D."/>
            <person name="Kerlavage A.R."/>
            <person name="Dougherty B.A."/>
            <person name="Tomb J.-F."/>
            <person name="Adams M.D."/>
            <person name="Reich C.I."/>
            <person name="Overbeek R."/>
            <person name="Kirkness E.F."/>
            <person name="Weinstock K.G."/>
            <person name="Merrick J.M."/>
            <person name="Glodek A."/>
            <person name="Scott J.L."/>
            <person name="Geoghagen N.S.M."/>
            <person name="Weidman J.F."/>
            <person name="Fuhrmann J.L."/>
            <person name="Nguyen D."/>
            <person name="Utterback T.R."/>
            <person name="Kelley J.M."/>
            <person name="Peterson J.D."/>
            <person name="Sadow P.W."/>
            <person name="Hanna M.C."/>
            <person name="Cotton M.D."/>
            <person name="Roberts K.M."/>
            <person name="Hurst M.A."/>
            <person name="Kaine B.P."/>
            <person name="Borodovsky M."/>
            <person name="Klenk H.-P."/>
            <person name="Fraser C.M."/>
            <person name="Smith H.O."/>
            <person name="Woese C.R."/>
            <person name="Venter J.C."/>
        </authorList>
    </citation>
    <scope>NUCLEOTIDE SEQUENCE [LARGE SCALE GENOMIC DNA]</scope>
    <source>
        <strain>ATCC 43067 / DSM 2661 / JAL-1 / JCM 10045 / NBRC 100440</strain>
    </source>
</reference>
<evidence type="ECO:0000255" key="1"/>
<evidence type="ECO:0000255" key="2">
    <source>
        <dbReference type="PROSITE-ProRule" id="PRU00711"/>
    </source>
</evidence>
<proteinExistence type="predicted"/>